<dbReference type="EC" id="2.1.1.45" evidence="1"/>
<dbReference type="EMBL" id="CP000061">
    <property type="protein sequence ID" value="ABC65547.1"/>
    <property type="molecule type" value="Genomic_DNA"/>
</dbReference>
<dbReference type="RefSeq" id="WP_011412711.1">
    <property type="nucleotide sequence ID" value="NC_007716.1"/>
</dbReference>
<dbReference type="SMR" id="Q2NJ46"/>
<dbReference type="STRING" id="322098.AYWB_430"/>
<dbReference type="KEGG" id="ayw:AYWB_430"/>
<dbReference type="eggNOG" id="COG0207">
    <property type="taxonomic scope" value="Bacteria"/>
</dbReference>
<dbReference type="HOGENOM" id="CLU_021669_0_0_14"/>
<dbReference type="OrthoDB" id="9774633at2"/>
<dbReference type="PhylomeDB" id="Q2NJ46"/>
<dbReference type="UniPathway" id="UPA00575"/>
<dbReference type="Proteomes" id="UP000001934">
    <property type="component" value="Chromosome"/>
</dbReference>
<dbReference type="GO" id="GO:0005829">
    <property type="term" value="C:cytosol"/>
    <property type="evidence" value="ECO:0007669"/>
    <property type="project" value="TreeGrafter"/>
</dbReference>
<dbReference type="GO" id="GO:0004799">
    <property type="term" value="F:thymidylate synthase activity"/>
    <property type="evidence" value="ECO:0007669"/>
    <property type="project" value="UniProtKB-UniRule"/>
</dbReference>
<dbReference type="GO" id="GO:0006231">
    <property type="term" value="P:dTMP biosynthetic process"/>
    <property type="evidence" value="ECO:0007669"/>
    <property type="project" value="UniProtKB-UniRule"/>
</dbReference>
<dbReference type="GO" id="GO:0006235">
    <property type="term" value="P:dTTP biosynthetic process"/>
    <property type="evidence" value="ECO:0007669"/>
    <property type="project" value="UniProtKB-UniRule"/>
</dbReference>
<dbReference type="GO" id="GO:0032259">
    <property type="term" value="P:methylation"/>
    <property type="evidence" value="ECO:0007669"/>
    <property type="project" value="UniProtKB-KW"/>
</dbReference>
<dbReference type="CDD" id="cd00351">
    <property type="entry name" value="TS_Pyrimidine_HMase"/>
    <property type="match status" value="1"/>
</dbReference>
<dbReference type="Gene3D" id="3.30.572.10">
    <property type="entry name" value="Thymidylate synthase/dCMP hydroxymethylase domain"/>
    <property type="match status" value="1"/>
</dbReference>
<dbReference type="HAMAP" id="MF_00008">
    <property type="entry name" value="Thymidy_synth_bact"/>
    <property type="match status" value="1"/>
</dbReference>
<dbReference type="InterPro" id="IPR045097">
    <property type="entry name" value="Thymidate_synth/dCMP_Mease"/>
</dbReference>
<dbReference type="InterPro" id="IPR023451">
    <property type="entry name" value="Thymidate_synth/dCMP_Mease_dom"/>
</dbReference>
<dbReference type="InterPro" id="IPR036926">
    <property type="entry name" value="Thymidate_synth/dCMP_Mease_sf"/>
</dbReference>
<dbReference type="InterPro" id="IPR000398">
    <property type="entry name" value="Thymidylate_synthase"/>
</dbReference>
<dbReference type="InterPro" id="IPR020940">
    <property type="entry name" value="Thymidylate_synthase_AS"/>
</dbReference>
<dbReference type="NCBIfam" id="NF002496">
    <property type="entry name" value="PRK01827.1-2"/>
    <property type="match status" value="1"/>
</dbReference>
<dbReference type="NCBIfam" id="NF002497">
    <property type="entry name" value="PRK01827.1-3"/>
    <property type="match status" value="1"/>
</dbReference>
<dbReference type="NCBIfam" id="TIGR03284">
    <property type="entry name" value="thym_sym"/>
    <property type="match status" value="1"/>
</dbReference>
<dbReference type="PANTHER" id="PTHR11548:SF9">
    <property type="entry name" value="THYMIDYLATE SYNTHASE"/>
    <property type="match status" value="1"/>
</dbReference>
<dbReference type="PANTHER" id="PTHR11548">
    <property type="entry name" value="THYMIDYLATE SYNTHASE 1"/>
    <property type="match status" value="1"/>
</dbReference>
<dbReference type="Pfam" id="PF00303">
    <property type="entry name" value="Thymidylat_synt"/>
    <property type="match status" value="1"/>
</dbReference>
<dbReference type="PRINTS" id="PR00108">
    <property type="entry name" value="THYMDSNTHASE"/>
</dbReference>
<dbReference type="SUPFAM" id="SSF55831">
    <property type="entry name" value="Thymidylate synthase/dCMP hydroxymethylase"/>
    <property type="match status" value="1"/>
</dbReference>
<dbReference type="PROSITE" id="PS00091">
    <property type="entry name" value="THYMIDYLATE_SYNTHASE"/>
    <property type="match status" value="1"/>
</dbReference>
<comment type="function">
    <text evidence="1">Catalyzes the reductive methylation of 2'-deoxyuridine-5'-monophosphate (dUMP) to 2'-deoxythymidine-5'-monophosphate (dTMP) while utilizing 5,10-methylenetetrahydrofolate (mTHF) as the methyl donor and reductant in the reaction, yielding dihydrofolate (DHF) as a by-product. This enzymatic reaction provides an intracellular de novo source of dTMP, an essential precursor for DNA biosynthesis.</text>
</comment>
<comment type="catalytic activity">
    <reaction evidence="1">
        <text>dUMP + (6R)-5,10-methylene-5,6,7,8-tetrahydrofolate = 7,8-dihydrofolate + dTMP</text>
        <dbReference type="Rhea" id="RHEA:12104"/>
        <dbReference type="ChEBI" id="CHEBI:15636"/>
        <dbReference type="ChEBI" id="CHEBI:57451"/>
        <dbReference type="ChEBI" id="CHEBI:63528"/>
        <dbReference type="ChEBI" id="CHEBI:246422"/>
        <dbReference type="EC" id="2.1.1.45"/>
    </reaction>
</comment>
<comment type="pathway">
    <text evidence="1">Pyrimidine metabolism; dTTP biosynthesis.</text>
</comment>
<comment type="subunit">
    <text evidence="1">Homodimer.</text>
</comment>
<comment type="subcellular location">
    <subcellularLocation>
        <location evidence="1">Cytoplasm</location>
    </subcellularLocation>
</comment>
<comment type="similarity">
    <text evidence="1">Belongs to the thymidylate synthase family. Bacterial-type ThyA subfamily.</text>
</comment>
<protein>
    <recommendedName>
        <fullName evidence="1">Thymidylate synthase</fullName>
        <shortName evidence="1">TS</shortName>
        <shortName evidence="1">TSase</shortName>
        <ecNumber evidence="1">2.1.1.45</ecNumber>
    </recommendedName>
</protein>
<feature type="chain" id="PRO_1000000573" description="Thymidylate synthase">
    <location>
        <begin position="1"/>
        <end position="288"/>
    </location>
</feature>
<feature type="active site" description="Nucleophile" evidence="1">
    <location>
        <position position="170"/>
    </location>
</feature>
<feature type="binding site" description="in other chain" evidence="1">
    <location>
        <position position="21"/>
    </location>
    <ligand>
        <name>dUMP</name>
        <dbReference type="ChEBI" id="CHEBI:246422"/>
        <note>ligand shared between dimeric partners</note>
    </ligand>
</feature>
<feature type="binding site" evidence="1">
    <location>
        <position position="51"/>
    </location>
    <ligand>
        <name>(6R)-5,10-methylene-5,6,7,8-tetrahydrofolate</name>
        <dbReference type="ChEBI" id="CHEBI:15636"/>
    </ligand>
</feature>
<feature type="binding site" evidence="1">
    <location>
        <begin position="150"/>
        <end position="151"/>
    </location>
    <ligand>
        <name>dUMP</name>
        <dbReference type="ChEBI" id="CHEBI:246422"/>
        <note>ligand shared between dimeric partners</note>
    </ligand>
</feature>
<feature type="binding site" description="in other chain" evidence="1">
    <location>
        <begin position="190"/>
        <end position="193"/>
    </location>
    <ligand>
        <name>dUMP</name>
        <dbReference type="ChEBI" id="CHEBI:246422"/>
        <note>ligand shared between dimeric partners</note>
    </ligand>
</feature>
<feature type="binding site" evidence="1">
    <location>
        <position position="193"/>
    </location>
    <ligand>
        <name>(6R)-5,10-methylene-5,6,7,8-tetrahydrofolate</name>
        <dbReference type="ChEBI" id="CHEBI:15636"/>
    </ligand>
</feature>
<feature type="binding site" description="in other chain" evidence="1">
    <location>
        <position position="201"/>
    </location>
    <ligand>
        <name>dUMP</name>
        <dbReference type="ChEBI" id="CHEBI:246422"/>
        <note>ligand shared between dimeric partners</note>
    </ligand>
</feature>
<feature type="binding site" description="in other chain" evidence="1">
    <location>
        <begin position="231"/>
        <end position="233"/>
    </location>
    <ligand>
        <name>dUMP</name>
        <dbReference type="ChEBI" id="CHEBI:246422"/>
        <note>ligand shared between dimeric partners</note>
    </ligand>
</feature>
<feature type="binding site" evidence="1">
    <location>
        <position position="287"/>
    </location>
    <ligand>
        <name>(6R)-5,10-methylene-5,6,7,8-tetrahydrofolate</name>
        <dbReference type="ChEBI" id="CHEBI:15636"/>
    </ligand>
</feature>
<proteinExistence type="inferred from homology"/>
<organism>
    <name type="scientific">Aster yellows witches'-broom phytoplasma (strain AYWB)</name>
    <dbReference type="NCBI Taxonomy" id="322098"/>
    <lineage>
        <taxon>Bacteria</taxon>
        <taxon>Bacillati</taxon>
        <taxon>Mycoplasmatota</taxon>
        <taxon>Mollicutes</taxon>
        <taxon>Acholeplasmatales</taxon>
        <taxon>Acholeplasmataceae</taxon>
        <taxon>Candidatus Phytoplasma</taxon>
        <taxon>16SrI (Aster yellows group)</taxon>
    </lineage>
</organism>
<name>TYSY_AYWBP</name>
<evidence type="ECO:0000255" key="1">
    <source>
        <dbReference type="HAMAP-Rule" id="MF_00008"/>
    </source>
</evidence>
<sequence>MNTYLDLCRFIFQKGSFRKDRTNTGTKSVFGYQMRFNLEEGFPLLTTKKMNLRSIIHELLWFLKGDTNIFYLVQNNVNIWNEWPYQKYQQSDFFQNETLKEFVKKIKNDPLFATKHGNLGPVYGKQWRDFNGVDQIKFLISEIKANPNSRRLILNSWNPSLLNQMALPPCHVLIQFYVHQGKLSLQLYQRSGDVFLGIPFNIASYSLLLMMVAQVTNLQPYEFIHTLGDAHIYSNHITQVQTQIQRTPKKLPQMILNPDIKNIDDFKFIDFILKNYQCDGILKGDIAV</sequence>
<keyword id="KW-0963">Cytoplasm</keyword>
<keyword id="KW-0489">Methyltransferase</keyword>
<keyword id="KW-0545">Nucleotide biosynthesis</keyword>
<keyword id="KW-0808">Transferase</keyword>
<accession>Q2NJ46</accession>
<gene>
    <name evidence="1" type="primary">thyA</name>
    <name type="ordered locus">AYWB_430</name>
</gene>
<reference key="1">
    <citation type="journal article" date="2006" name="J. Bacteriol.">
        <title>Living with genome instability: the adaptation of phytoplasmas to diverse environments of their insect and plant hosts.</title>
        <authorList>
            <person name="Bai X."/>
            <person name="Zhang J."/>
            <person name="Ewing A."/>
            <person name="Miller S.A."/>
            <person name="Jancso Radek A."/>
            <person name="Shevchenko D.V."/>
            <person name="Tsukerman K."/>
            <person name="Walunas T."/>
            <person name="Lapidus A."/>
            <person name="Campbell J.W."/>
            <person name="Hogenhout S.A."/>
        </authorList>
    </citation>
    <scope>NUCLEOTIDE SEQUENCE [LARGE SCALE GENOMIC DNA]</scope>
    <source>
        <strain>AYWB</strain>
    </source>
</reference>